<keyword id="KW-0028">Amino-acid biosynthesis</keyword>
<keyword id="KW-0067">ATP-binding</keyword>
<keyword id="KW-0963">Cytoplasm</keyword>
<keyword id="KW-0418">Kinase</keyword>
<keyword id="KW-0547">Nucleotide-binding</keyword>
<keyword id="KW-0641">Proline biosynthesis</keyword>
<keyword id="KW-1185">Reference proteome</keyword>
<keyword id="KW-0808">Transferase</keyword>
<gene>
    <name evidence="1" type="primary">proB</name>
    <name type="ordered locus">Psyc_1503</name>
</gene>
<name>PROB_PSYA2</name>
<dbReference type="EC" id="2.7.2.11" evidence="1"/>
<dbReference type="EMBL" id="CP000082">
    <property type="protein sequence ID" value="AAZ19351.1"/>
    <property type="molecule type" value="Genomic_DNA"/>
</dbReference>
<dbReference type="RefSeq" id="WP_011280768.1">
    <property type="nucleotide sequence ID" value="NC_007204.1"/>
</dbReference>
<dbReference type="SMR" id="Q4FRK7"/>
<dbReference type="STRING" id="259536.Psyc_1503"/>
<dbReference type="KEGG" id="par:Psyc_1503"/>
<dbReference type="eggNOG" id="COG0263">
    <property type="taxonomic scope" value="Bacteria"/>
</dbReference>
<dbReference type="HOGENOM" id="CLU_025400_2_0_6"/>
<dbReference type="OrthoDB" id="9804434at2"/>
<dbReference type="UniPathway" id="UPA00098">
    <property type="reaction ID" value="UER00359"/>
</dbReference>
<dbReference type="Proteomes" id="UP000000546">
    <property type="component" value="Chromosome"/>
</dbReference>
<dbReference type="GO" id="GO:0005829">
    <property type="term" value="C:cytosol"/>
    <property type="evidence" value="ECO:0007669"/>
    <property type="project" value="TreeGrafter"/>
</dbReference>
<dbReference type="GO" id="GO:0005524">
    <property type="term" value="F:ATP binding"/>
    <property type="evidence" value="ECO:0007669"/>
    <property type="project" value="UniProtKB-KW"/>
</dbReference>
<dbReference type="GO" id="GO:0004349">
    <property type="term" value="F:glutamate 5-kinase activity"/>
    <property type="evidence" value="ECO:0007669"/>
    <property type="project" value="UniProtKB-UniRule"/>
</dbReference>
<dbReference type="GO" id="GO:0003723">
    <property type="term" value="F:RNA binding"/>
    <property type="evidence" value="ECO:0007669"/>
    <property type="project" value="InterPro"/>
</dbReference>
<dbReference type="GO" id="GO:0055129">
    <property type="term" value="P:L-proline biosynthetic process"/>
    <property type="evidence" value="ECO:0007669"/>
    <property type="project" value="UniProtKB-UniRule"/>
</dbReference>
<dbReference type="CDD" id="cd04242">
    <property type="entry name" value="AAK_G5K_ProB"/>
    <property type="match status" value="1"/>
</dbReference>
<dbReference type="CDD" id="cd21157">
    <property type="entry name" value="PUA_G5K"/>
    <property type="match status" value="1"/>
</dbReference>
<dbReference type="FunFam" id="3.40.1160.10:FF:000018">
    <property type="entry name" value="Glutamate 5-kinase"/>
    <property type="match status" value="1"/>
</dbReference>
<dbReference type="Gene3D" id="3.40.1160.10">
    <property type="entry name" value="Acetylglutamate kinase-like"/>
    <property type="match status" value="2"/>
</dbReference>
<dbReference type="Gene3D" id="2.30.130.10">
    <property type="entry name" value="PUA domain"/>
    <property type="match status" value="1"/>
</dbReference>
<dbReference type="HAMAP" id="MF_00456">
    <property type="entry name" value="ProB"/>
    <property type="match status" value="1"/>
</dbReference>
<dbReference type="InterPro" id="IPR036393">
    <property type="entry name" value="AceGlu_kinase-like_sf"/>
</dbReference>
<dbReference type="InterPro" id="IPR001048">
    <property type="entry name" value="Asp/Glu/Uridylate_kinase"/>
</dbReference>
<dbReference type="InterPro" id="IPR041739">
    <property type="entry name" value="G5K_ProB"/>
</dbReference>
<dbReference type="InterPro" id="IPR001057">
    <property type="entry name" value="Glu/AcGlu_kinase"/>
</dbReference>
<dbReference type="InterPro" id="IPR011529">
    <property type="entry name" value="Glu_5kinase"/>
</dbReference>
<dbReference type="InterPro" id="IPR005715">
    <property type="entry name" value="Glu_5kinase/COase_Synthase"/>
</dbReference>
<dbReference type="InterPro" id="IPR019797">
    <property type="entry name" value="Glutamate_5-kinase_CS"/>
</dbReference>
<dbReference type="InterPro" id="IPR002478">
    <property type="entry name" value="PUA"/>
</dbReference>
<dbReference type="InterPro" id="IPR015947">
    <property type="entry name" value="PUA-like_sf"/>
</dbReference>
<dbReference type="InterPro" id="IPR036974">
    <property type="entry name" value="PUA_sf"/>
</dbReference>
<dbReference type="NCBIfam" id="TIGR01027">
    <property type="entry name" value="proB"/>
    <property type="match status" value="1"/>
</dbReference>
<dbReference type="PANTHER" id="PTHR43654">
    <property type="entry name" value="GLUTAMATE 5-KINASE"/>
    <property type="match status" value="1"/>
</dbReference>
<dbReference type="PANTHER" id="PTHR43654:SF1">
    <property type="entry name" value="ISOPENTENYL PHOSPHATE KINASE"/>
    <property type="match status" value="1"/>
</dbReference>
<dbReference type="Pfam" id="PF00696">
    <property type="entry name" value="AA_kinase"/>
    <property type="match status" value="1"/>
</dbReference>
<dbReference type="Pfam" id="PF01472">
    <property type="entry name" value="PUA"/>
    <property type="match status" value="1"/>
</dbReference>
<dbReference type="PIRSF" id="PIRSF000729">
    <property type="entry name" value="GK"/>
    <property type="match status" value="1"/>
</dbReference>
<dbReference type="PRINTS" id="PR00474">
    <property type="entry name" value="GLU5KINASE"/>
</dbReference>
<dbReference type="SMART" id="SM00359">
    <property type="entry name" value="PUA"/>
    <property type="match status" value="1"/>
</dbReference>
<dbReference type="SUPFAM" id="SSF53633">
    <property type="entry name" value="Carbamate kinase-like"/>
    <property type="match status" value="1"/>
</dbReference>
<dbReference type="SUPFAM" id="SSF88697">
    <property type="entry name" value="PUA domain-like"/>
    <property type="match status" value="1"/>
</dbReference>
<dbReference type="PROSITE" id="PS00902">
    <property type="entry name" value="GLUTAMATE_5_KINASE"/>
    <property type="match status" value="1"/>
</dbReference>
<dbReference type="PROSITE" id="PS50890">
    <property type="entry name" value="PUA"/>
    <property type="match status" value="1"/>
</dbReference>
<feature type="chain" id="PRO_0000230061" description="Glutamate 5-kinase">
    <location>
        <begin position="1"/>
        <end position="390"/>
    </location>
</feature>
<feature type="domain" description="PUA" evidence="1">
    <location>
        <begin position="295"/>
        <end position="374"/>
    </location>
</feature>
<feature type="binding site" evidence="1">
    <location>
        <position position="29"/>
    </location>
    <ligand>
        <name>ATP</name>
        <dbReference type="ChEBI" id="CHEBI:30616"/>
    </ligand>
</feature>
<feature type="binding site" evidence="1">
    <location>
        <position position="69"/>
    </location>
    <ligand>
        <name>substrate</name>
    </ligand>
</feature>
<feature type="binding site" evidence="1">
    <location>
        <position position="156"/>
    </location>
    <ligand>
        <name>substrate</name>
    </ligand>
</feature>
<feature type="binding site" evidence="1">
    <location>
        <position position="168"/>
    </location>
    <ligand>
        <name>substrate</name>
    </ligand>
</feature>
<feature type="binding site" evidence="1">
    <location>
        <begin position="188"/>
        <end position="189"/>
    </location>
    <ligand>
        <name>ATP</name>
        <dbReference type="ChEBI" id="CHEBI:30616"/>
    </ligand>
</feature>
<comment type="function">
    <text evidence="1">Catalyzes the transfer of a phosphate group to glutamate to form L-glutamate 5-phosphate.</text>
</comment>
<comment type="catalytic activity">
    <reaction evidence="1">
        <text>L-glutamate + ATP = L-glutamyl 5-phosphate + ADP</text>
        <dbReference type="Rhea" id="RHEA:14877"/>
        <dbReference type="ChEBI" id="CHEBI:29985"/>
        <dbReference type="ChEBI" id="CHEBI:30616"/>
        <dbReference type="ChEBI" id="CHEBI:58274"/>
        <dbReference type="ChEBI" id="CHEBI:456216"/>
        <dbReference type="EC" id="2.7.2.11"/>
    </reaction>
</comment>
<comment type="pathway">
    <text evidence="1">Amino-acid biosynthesis; L-proline biosynthesis; L-glutamate 5-semialdehyde from L-glutamate: step 1/2.</text>
</comment>
<comment type="subcellular location">
    <subcellularLocation>
        <location evidence="1">Cytoplasm</location>
    </subcellularLocation>
</comment>
<comment type="similarity">
    <text evidence="1">Belongs to the glutamate 5-kinase family.</text>
</comment>
<protein>
    <recommendedName>
        <fullName evidence="1">Glutamate 5-kinase</fullName>
        <ecNumber evidence="1">2.7.2.11</ecNumber>
    </recommendedName>
    <alternativeName>
        <fullName evidence="1">Gamma-glutamyl kinase</fullName>
        <shortName evidence="1">GK</shortName>
    </alternativeName>
</protein>
<proteinExistence type="inferred from homology"/>
<reference key="1">
    <citation type="journal article" date="2010" name="Appl. Environ. Microbiol.">
        <title>The genome sequence of Psychrobacter arcticus 273-4, a psychroactive Siberian permafrost bacterium, reveals mechanisms for adaptation to low-temperature growth.</title>
        <authorList>
            <person name="Ayala-del-Rio H.L."/>
            <person name="Chain P.S."/>
            <person name="Grzymski J.J."/>
            <person name="Ponder M.A."/>
            <person name="Ivanova N."/>
            <person name="Bergholz P.W."/>
            <person name="Di Bartolo G."/>
            <person name="Hauser L."/>
            <person name="Land M."/>
            <person name="Bakermans C."/>
            <person name="Rodrigues D."/>
            <person name="Klappenbach J."/>
            <person name="Zarka D."/>
            <person name="Larimer F."/>
            <person name="Richardson P."/>
            <person name="Murray A."/>
            <person name="Thomashow M."/>
            <person name="Tiedje J.M."/>
        </authorList>
    </citation>
    <scope>NUCLEOTIDE SEQUENCE [LARGE SCALE GENOMIC DNA]</scope>
    <source>
        <strain>DSM 17307 / VKM B-2377 / 273-4</strain>
    </source>
</reference>
<accession>Q4FRK7</accession>
<evidence type="ECO:0000255" key="1">
    <source>
        <dbReference type="HAMAP-Rule" id="MF_00456"/>
    </source>
</evidence>
<sequence>MAVGIENTIEEARFVEQARNFDIQRVIVKIGSSLLTNNGRGLDRTAIYEWAKQIAKLHKQGIEVLLVSSGAVAEGVVRMNLEERPKKLAALQACASIGQMGLIETWWSALIQHGIQSSQLLLTHDDLSNRSRYLNTTGALTQLLEWRVLPVINENDTITIDEIKFGDNDTLGAMAAAMVNADLYIILTDQEGVFTDNPRDNPNAKMIRQERAMADYLFDIAGDGGKLGRGGMLTKIRAGRLAAMGGCPTVIVSGAIDDVITRVVSGEAVGTLLTTNDQDKIIARKQWLAAHLRMSGSLIVDAGAAKAVVEHQKSLLPVGVSEVRGDFDEGDVVEIVHQDTGERIAVGQVNFSSRDACRVARERTEQFDRILGNNEERVVMVHRDNLALTM</sequence>
<organism>
    <name type="scientific">Psychrobacter arcticus (strain DSM 17307 / VKM B-2377 / 273-4)</name>
    <dbReference type="NCBI Taxonomy" id="259536"/>
    <lineage>
        <taxon>Bacteria</taxon>
        <taxon>Pseudomonadati</taxon>
        <taxon>Pseudomonadota</taxon>
        <taxon>Gammaproteobacteria</taxon>
        <taxon>Moraxellales</taxon>
        <taxon>Moraxellaceae</taxon>
        <taxon>Psychrobacter</taxon>
    </lineage>
</organism>